<keyword id="KW-0067">ATP-binding</keyword>
<keyword id="KW-0963">Cytoplasm</keyword>
<keyword id="KW-0418">Kinase</keyword>
<keyword id="KW-0460">Magnesium</keyword>
<keyword id="KW-0479">Metal-binding</keyword>
<keyword id="KW-0545">Nucleotide biosynthesis</keyword>
<keyword id="KW-0547">Nucleotide-binding</keyword>
<keyword id="KW-0808">Transferase</keyword>
<dbReference type="EC" id="2.7.6.1" evidence="1"/>
<dbReference type="EMBL" id="BX571856">
    <property type="protein sequence ID" value="CAG39523.1"/>
    <property type="molecule type" value="Genomic_DNA"/>
</dbReference>
<dbReference type="RefSeq" id="WP_000933774.1">
    <property type="nucleotide sequence ID" value="NC_002952.2"/>
</dbReference>
<dbReference type="SMR" id="Q6GJH1"/>
<dbReference type="KEGG" id="sar:SAR0501"/>
<dbReference type="HOGENOM" id="CLU_033546_1_0_9"/>
<dbReference type="UniPathway" id="UPA00087">
    <property type="reaction ID" value="UER00172"/>
</dbReference>
<dbReference type="Proteomes" id="UP000000596">
    <property type="component" value="Chromosome"/>
</dbReference>
<dbReference type="GO" id="GO:0005737">
    <property type="term" value="C:cytoplasm"/>
    <property type="evidence" value="ECO:0007669"/>
    <property type="project" value="UniProtKB-SubCell"/>
</dbReference>
<dbReference type="GO" id="GO:0002189">
    <property type="term" value="C:ribose phosphate diphosphokinase complex"/>
    <property type="evidence" value="ECO:0007669"/>
    <property type="project" value="TreeGrafter"/>
</dbReference>
<dbReference type="GO" id="GO:0005524">
    <property type="term" value="F:ATP binding"/>
    <property type="evidence" value="ECO:0007669"/>
    <property type="project" value="UniProtKB-KW"/>
</dbReference>
<dbReference type="GO" id="GO:0016301">
    <property type="term" value="F:kinase activity"/>
    <property type="evidence" value="ECO:0007669"/>
    <property type="project" value="UniProtKB-KW"/>
</dbReference>
<dbReference type="GO" id="GO:0000287">
    <property type="term" value="F:magnesium ion binding"/>
    <property type="evidence" value="ECO:0007669"/>
    <property type="project" value="UniProtKB-UniRule"/>
</dbReference>
<dbReference type="GO" id="GO:0004749">
    <property type="term" value="F:ribose phosphate diphosphokinase activity"/>
    <property type="evidence" value="ECO:0007669"/>
    <property type="project" value="UniProtKB-UniRule"/>
</dbReference>
<dbReference type="GO" id="GO:0006015">
    <property type="term" value="P:5-phosphoribose 1-diphosphate biosynthetic process"/>
    <property type="evidence" value="ECO:0007669"/>
    <property type="project" value="UniProtKB-UniRule"/>
</dbReference>
<dbReference type="GO" id="GO:0006164">
    <property type="term" value="P:purine nucleotide biosynthetic process"/>
    <property type="evidence" value="ECO:0007669"/>
    <property type="project" value="TreeGrafter"/>
</dbReference>
<dbReference type="GO" id="GO:0009156">
    <property type="term" value="P:ribonucleoside monophosphate biosynthetic process"/>
    <property type="evidence" value="ECO:0007669"/>
    <property type="project" value="InterPro"/>
</dbReference>
<dbReference type="CDD" id="cd06223">
    <property type="entry name" value="PRTases_typeI"/>
    <property type="match status" value="1"/>
</dbReference>
<dbReference type="FunFam" id="3.40.50.2020:FF:000002">
    <property type="entry name" value="Ribose-phosphate pyrophosphokinase"/>
    <property type="match status" value="1"/>
</dbReference>
<dbReference type="FunFam" id="3.40.50.2020:FF:000014">
    <property type="entry name" value="Ribose-phosphate pyrophosphokinase 1"/>
    <property type="match status" value="1"/>
</dbReference>
<dbReference type="Gene3D" id="3.40.50.2020">
    <property type="match status" value="2"/>
</dbReference>
<dbReference type="HAMAP" id="MF_00583_B">
    <property type="entry name" value="RibP_PPkinase_B"/>
    <property type="match status" value="1"/>
</dbReference>
<dbReference type="InterPro" id="IPR000842">
    <property type="entry name" value="PRib_PP_synth_CS"/>
</dbReference>
<dbReference type="InterPro" id="IPR029099">
    <property type="entry name" value="Pribosyltran_N"/>
</dbReference>
<dbReference type="InterPro" id="IPR000836">
    <property type="entry name" value="PRibTrfase_dom"/>
</dbReference>
<dbReference type="InterPro" id="IPR029057">
    <property type="entry name" value="PRTase-like"/>
</dbReference>
<dbReference type="InterPro" id="IPR005946">
    <property type="entry name" value="Rib-P_diPkinase"/>
</dbReference>
<dbReference type="InterPro" id="IPR037515">
    <property type="entry name" value="Rib-P_diPkinase_bac"/>
</dbReference>
<dbReference type="NCBIfam" id="NF002320">
    <property type="entry name" value="PRK01259.1"/>
    <property type="match status" value="1"/>
</dbReference>
<dbReference type="NCBIfam" id="NF002618">
    <property type="entry name" value="PRK02269.1"/>
    <property type="match status" value="1"/>
</dbReference>
<dbReference type="NCBIfam" id="TIGR01251">
    <property type="entry name" value="ribP_PPkin"/>
    <property type="match status" value="1"/>
</dbReference>
<dbReference type="PANTHER" id="PTHR10210">
    <property type="entry name" value="RIBOSE-PHOSPHATE DIPHOSPHOKINASE FAMILY MEMBER"/>
    <property type="match status" value="1"/>
</dbReference>
<dbReference type="PANTHER" id="PTHR10210:SF41">
    <property type="entry name" value="RIBOSE-PHOSPHATE PYROPHOSPHOKINASE 1, CHLOROPLASTIC"/>
    <property type="match status" value="1"/>
</dbReference>
<dbReference type="Pfam" id="PF14572">
    <property type="entry name" value="Pribosyl_synth"/>
    <property type="match status" value="1"/>
</dbReference>
<dbReference type="Pfam" id="PF13793">
    <property type="entry name" value="Pribosyltran_N"/>
    <property type="match status" value="1"/>
</dbReference>
<dbReference type="SMART" id="SM01400">
    <property type="entry name" value="Pribosyltran_N"/>
    <property type="match status" value="1"/>
</dbReference>
<dbReference type="SUPFAM" id="SSF53271">
    <property type="entry name" value="PRTase-like"/>
    <property type="match status" value="1"/>
</dbReference>
<dbReference type="PROSITE" id="PS00114">
    <property type="entry name" value="PRPP_SYNTHASE"/>
    <property type="match status" value="1"/>
</dbReference>
<evidence type="ECO:0000255" key="1">
    <source>
        <dbReference type="HAMAP-Rule" id="MF_00583"/>
    </source>
</evidence>
<proteinExistence type="inferred from homology"/>
<protein>
    <recommendedName>
        <fullName evidence="1">Ribose-phosphate pyrophosphokinase</fullName>
        <shortName evidence="1">RPPK</shortName>
        <ecNumber evidence="1">2.7.6.1</ecNumber>
    </recommendedName>
    <alternativeName>
        <fullName evidence="1">5-phospho-D-ribosyl alpha-1-diphosphate synthase</fullName>
    </alternativeName>
    <alternativeName>
        <fullName evidence="1">Phosphoribosyl diphosphate synthase</fullName>
    </alternativeName>
    <alternativeName>
        <fullName evidence="1">Phosphoribosyl pyrophosphate synthase</fullName>
        <shortName evidence="1">P-Rib-PP synthase</shortName>
        <shortName evidence="1">PRPP synthase</shortName>
        <shortName evidence="1">PRPPase</shortName>
    </alternativeName>
</protein>
<organism>
    <name type="scientific">Staphylococcus aureus (strain MRSA252)</name>
    <dbReference type="NCBI Taxonomy" id="282458"/>
    <lineage>
        <taxon>Bacteria</taxon>
        <taxon>Bacillati</taxon>
        <taxon>Bacillota</taxon>
        <taxon>Bacilli</taxon>
        <taxon>Bacillales</taxon>
        <taxon>Staphylococcaceae</taxon>
        <taxon>Staphylococcus</taxon>
    </lineage>
</organism>
<sequence length="321" mass="35284">MLNNEYKNSSLKIFSLKGNEALAQEVADQVGIELGKCSVKRFSDGEIQINIEESIRGCDVFIIQPTSYPVNLHLMELLIMIDACKRASAATINIVVPYYGYARQDRKARSREPITAKLVANLIETAGATRMIALDLHAPQIQGFFDIPIDHLMGVPILAKHFKDDPNINPEECVVVSPDHGGVTRARKLADILKTPIAIIDKRRPRPNVAEVMNIVGEIEGRTAIIIDDIIDTAGTITLAAQALKDKGAKEVYACCTHPVLSGPAKERIENSAIKELIVTNSIHLDEDRKPSNTKELSVAGLIAQAIIRVYERESVSVLFD</sequence>
<name>KPRS_STAAR</name>
<gene>
    <name evidence="1" type="primary">prs</name>
    <name type="ordered locus">SAR0501</name>
</gene>
<comment type="function">
    <text evidence="1">Involved in the biosynthesis of the central metabolite phospho-alpha-D-ribosyl-1-pyrophosphate (PRPP) via the transfer of pyrophosphoryl group from ATP to 1-hydroxyl of ribose-5-phosphate (Rib-5-P).</text>
</comment>
<comment type="catalytic activity">
    <reaction evidence="1">
        <text>D-ribose 5-phosphate + ATP = 5-phospho-alpha-D-ribose 1-diphosphate + AMP + H(+)</text>
        <dbReference type="Rhea" id="RHEA:15609"/>
        <dbReference type="ChEBI" id="CHEBI:15378"/>
        <dbReference type="ChEBI" id="CHEBI:30616"/>
        <dbReference type="ChEBI" id="CHEBI:58017"/>
        <dbReference type="ChEBI" id="CHEBI:78346"/>
        <dbReference type="ChEBI" id="CHEBI:456215"/>
        <dbReference type="EC" id="2.7.6.1"/>
    </reaction>
</comment>
<comment type="cofactor">
    <cofactor evidence="1">
        <name>Mg(2+)</name>
        <dbReference type="ChEBI" id="CHEBI:18420"/>
    </cofactor>
    <text evidence="1">Binds 2 Mg(2+) ions per subunit.</text>
</comment>
<comment type="pathway">
    <text evidence="1">Metabolic intermediate biosynthesis; 5-phospho-alpha-D-ribose 1-diphosphate biosynthesis; 5-phospho-alpha-D-ribose 1-diphosphate from D-ribose 5-phosphate (route I): step 1/1.</text>
</comment>
<comment type="subunit">
    <text evidence="1">Homohexamer.</text>
</comment>
<comment type="subcellular location">
    <subcellularLocation>
        <location evidence="1">Cytoplasm</location>
    </subcellularLocation>
</comment>
<comment type="similarity">
    <text evidence="1">Belongs to the ribose-phosphate pyrophosphokinase family. Class I subfamily.</text>
</comment>
<reference key="1">
    <citation type="journal article" date="2004" name="Proc. Natl. Acad. Sci. U.S.A.">
        <title>Complete genomes of two clinical Staphylococcus aureus strains: evidence for the rapid evolution of virulence and drug resistance.</title>
        <authorList>
            <person name="Holden M.T.G."/>
            <person name="Feil E.J."/>
            <person name="Lindsay J.A."/>
            <person name="Peacock S.J."/>
            <person name="Day N.P.J."/>
            <person name="Enright M.C."/>
            <person name="Foster T.J."/>
            <person name="Moore C.E."/>
            <person name="Hurst L."/>
            <person name="Atkin R."/>
            <person name="Barron A."/>
            <person name="Bason N."/>
            <person name="Bentley S.D."/>
            <person name="Chillingworth C."/>
            <person name="Chillingworth T."/>
            <person name="Churcher C."/>
            <person name="Clark L."/>
            <person name="Corton C."/>
            <person name="Cronin A."/>
            <person name="Doggett J."/>
            <person name="Dowd L."/>
            <person name="Feltwell T."/>
            <person name="Hance Z."/>
            <person name="Harris B."/>
            <person name="Hauser H."/>
            <person name="Holroyd S."/>
            <person name="Jagels K."/>
            <person name="James K.D."/>
            <person name="Lennard N."/>
            <person name="Line A."/>
            <person name="Mayes R."/>
            <person name="Moule S."/>
            <person name="Mungall K."/>
            <person name="Ormond D."/>
            <person name="Quail M.A."/>
            <person name="Rabbinowitsch E."/>
            <person name="Rutherford K.M."/>
            <person name="Sanders M."/>
            <person name="Sharp S."/>
            <person name="Simmonds M."/>
            <person name="Stevens K."/>
            <person name="Whitehead S."/>
            <person name="Barrell B.G."/>
            <person name="Spratt B.G."/>
            <person name="Parkhill J."/>
        </authorList>
    </citation>
    <scope>NUCLEOTIDE SEQUENCE [LARGE SCALE GENOMIC DNA]</scope>
    <source>
        <strain>MRSA252</strain>
    </source>
</reference>
<feature type="chain" id="PRO_0000141189" description="Ribose-phosphate pyrophosphokinase">
    <location>
        <begin position="1"/>
        <end position="321"/>
    </location>
</feature>
<feature type="active site" evidence="1">
    <location>
        <position position="202"/>
    </location>
</feature>
<feature type="binding site" evidence="1">
    <location>
        <begin position="44"/>
        <end position="46"/>
    </location>
    <ligand>
        <name>ATP</name>
        <dbReference type="ChEBI" id="CHEBI:30616"/>
    </ligand>
</feature>
<feature type="binding site" evidence="1">
    <location>
        <begin position="103"/>
        <end position="104"/>
    </location>
    <ligand>
        <name>ATP</name>
        <dbReference type="ChEBI" id="CHEBI:30616"/>
    </ligand>
</feature>
<feature type="binding site" evidence="1">
    <location>
        <position position="137"/>
    </location>
    <ligand>
        <name>Mg(2+)</name>
        <dbReference type="ChEBI" id="CHEBI:18420"/>
        <label>1</label>
    </ligand>
</feature>
<feature type="binding site" evidence="1">
    <location>
        <position position="179"/>
    </location>
    <ligand>
        <name>Mg(2+)</name>
        <dbReference type="ChEBI" id="CHEBI:18420"/>
        <label>2</label>
    </ligand>
</feature>
<feature type="binding site" evidence="1">
    <location>
        <position position="204"/>
    </location>
    <ligand>
        <name>D-ribose 5-phosphate</name>
        <dbReference type="ChEBI" id="CHEBI:78346"/>
    </ligand>
</feature>
<feature type="binding site" evidence="1">
    <location>
        <position position="228"/>
    </location>
    <ligand>
        <name>D-ribose 5-phosphate</name>
        <dbReference type="ChEBI" id="CHEBI:78346"/>
    </ligand>
</feature>
<feature type="binding site" evidence="1">
    <location>
        <begin position="232"/>
        <end position="236"/>
    </location>
    <ligand>
        <name>D-ribose 5-phosphate</name>
        <dbReference type="ChEBI" id="CHEBI:78346"/>
    </ligand>
</feature>
<accession>Q6GJH1</accession>